<dbReference type="EMBL" id="CR382123">
    <property type="protein sequence ID" value="CAH01610.1"/>
    <property type="molecule type" value="Genomic_DNA"/>
</dbReference>
<dbReference type="RefSeq" id="XP_452759.1">
    <property type="nucleotide sequence ID" value="XM_452759.1"/>
</dbReference>
<dbReference type="SMR" id="Q6CTI0"/>
<dbReference type="FunCoup" id="Q6CTI0">
    <property type="interactions" value="67"/>
</dbReference>
<dbReference type="STRING" id="284590.Q6CTI0"/>
<dbReference type="PaxDb" id="284590-Q6CTI0"/>
<dbReference type="KEGG" id="kla:KLLA0_C12573g"/>
<dbReference type="eggNOG" id="ENOG502S8WV">
    <property type="taxonomic scope" value="Eukaryota"/>
</dbReference>
<dbReference type="HOGENOM" id="CLU_013228_1_0_1"/>
<dbReference type="InParanoid" id="Q6CTI0"/>
<dbReference type="OMA" id="EHTFSGF"/>
<dbReference type="Proteomes" id="UP000000598">
    <property type="component" value="Chromosome C"/>
</dbReference>
<dbReference type="GO" id="GO:0005886">
    <property type="term" value="C:plasma membrane"/>
    <property type="evidence" value="ECO:0007669"/>
    <property type="project" value="UniProtKB-SubCell"/>
</dbReference>
<dbReference type="GO" id="GO:0070941">
    <property type="term" value="P:eisosome assembly"/>
    <property type="evidence" value="ECO:0007669"/>
    <property type="project" value="TreeGrafter"/>
</dbReference>
<dbReference type="InterPro" id="IPR024527">
    <property type="entry name" value="Eisosome1"/>
</dbReference>
<dbReference type="PANTHER" id="PTHR28298">
    <property type="entry name" value="EISOSOME PROTEIN 1"/>
    <property type="match status" value="1"/>
</dbReference>
<dbReference type="PANTHER" id="PTHR28298:SF1">
    <property type="entry name" value="EISOSOME PROTEIN 1"/>
    <property type="match status" value="1"/>
</dbReference>
<dbReference type="Pfam" id="PF12757">
    <property type="entry name" value="Eisosome1"/>
    <property type="match status" value="1"/>
</dbReference>
<reference key="1">
    <citation type="journal article" date="2004" name="Nature">
        <title>Genome evolution in yeasts.</title>
        <authorList>
            <person name="Dujon B."/>
            <person name="Sherman D."/>
            <person name="Fischer G."/>
            <person name="Durrens P."/>
            <person name="Casaregola S."/>
            <person name="Lafontaine I."/>
            <person name="de Montigny J."/>
            <person name="Marck C."/>
            <person name="Neuveglise C."/>
            <person name="Talla E."/>
            <person name="Goffard N."/>
            <person name="Frangeul L."/>
            <person name="Aigle M."/>
            <person name="Anthouard V."/>
            <person name="Babour A."/>
            <person name="Barbe V."/>
            <person name="Barnay S."/>
            <person name="Blanchin S."/>
            <person name="Beckerich J.-M."/>
            <person name="Beyne E."/>
            <person name="Bleykasten C."/>
            <person name="Boisrame A."/>
            <person name="Boyer J."/>
            <person name="Cattolico L."/>
            <person name="Confanioleri F."/>
            <person name="de Daruvar A."/>
            <person name="Despons L."/>
            <person name="Fabre E."/>
            <person name="Fairhead C."/>
            <person name="Ferry-Dumazet H."/>
            <person name="Groppi A."/>
            <person name="Hantraye F."/>
            <person name="Hennequin C."/>
            <person name="Jauniaux N."/>
            <person name="Joyet P."/>
            <person name="Kachouri R."/>
            <person name="Kerrest A."/>
            <person name="Koszul R."/>
            <person name="Lemaire M."/>
            <person name="Lesur I."/>
            <person name="Ma L."/>
            <person name="Muller H."/>
            <person name="Nicaud J.-M."/>
            <person name="Nikolski M."/>
            <person name="Oztas S."/>
            <person name="Ozier-Kalogeropoulos O."/>
            <person name="Pellenz S."/>
            <person name="Potier S."/>
            <person name="Richard G.-F."/>
            <person name="Straub M.-L."/>
            <person name="Suleau A."/>
            <person name="Swennen D."/>
            <person name="Tekaia F."/>
            <person name="Wesolowski-Louvel M."/>
            <person name="Westhof E."/>
            <person name="Wirth B."/>
            <person name="Zeniou-Meyer M."/>
            <person name="Zivanovic Y."/>
            <person name="Bolotin-Fukuhara M."/>
            <person name="Thierry A."/>
            <person name="Bouchier C."/>
            <person name="Caudron B."/>
            <person name="Scarpelli C."/>
            <person name="Gaillardin C."/>
            <person name="Weissenbach J."/>
            <person name="Wincker P."/>
            <person name="Souciet J.-L."/>
        </authorList>
    </citation>
    <scope>NUCLEOTIDE SEQUENCE [LARGE SCALE GENOMIC DNA]</scope>
    <source>
        <strain>ATCC 8585 / CBS 2359 / DSM 70799 / NBRC 1267 / NRRL Y-1140 / WM37</strain>
    </source>
</reference>
<organism>
    <name type="scientific">Kluyveromyces lactis (strain ATCC 8585 / CBS 2359 / DSM 70799 / NBRC 1267 / NRRL Y-1140 / WM37)</name>
    <name type="common">Yeast</name>
    <name type="synonym">Candida sphaerica</name>
    <dbReference type="NCBI Taxonomy" id="284590"/>
    <lineage>
        <taxon>Eukaryota</taxon>
        <taxon>Fungi</taxon>
        <taxon>Dikarya</taxon>
        <taxon>Ascomycota</taxon>
        <taxon>Saccharomycotina</taxon>
        <taxon>Saccharomycetes</taxon>
        <taxon>Saccharomycetales</taxon>
        <taxon>Saccharomycetaceae</taxon>
        <taxon>Kluyveromyces</taxon>
    </lineage>
</organism>
<sequence>MSLVSAVTGDESRDTNGAEQSSVYQSAGKPLSKEALYRAKLKYGVFQSPAQSLKAGVVNGKDASDTAANLATSNKTTIEAYKRLLNPNASKAANAVITPKKTDQSRPASAVVSSAASSAAIAAPKAARSRTSSTASTTVTYVNSSSSSPLHSKTPKMDITKVLAGAERNAAESVHQRTNPEKVSYVRGITDRSVGKAADASFSLTSDIVSNLPTKKEYIQSAEKESHAAEWAQKAVAALKDFNPDDVTDKNWREREEERKRLIKNLTSETVLTKAKLNAQQRLDTIDRETSQRAIFRNAEYNRAAASVAQENLRKTRSSASATANKVNLGGGLWLAPDDIDNIAKGLIAPVLDEVDQRTGAQRAMDIDIQKRSVDYQQQYEEWVNIQTEKQNNDSLLQAKAFENHQKETADIEATLAKKFQNLCTQKDSEVAKLKEALEAKKAELAKLKEDNEEELKREDEMITTECADLQKSNENELEQAKKDQEELLVPFKNDLAAAEDHHTELQDQKGKIEENIQELRDSIEKHKSHVEELNAQIETQQQQLETETEALNLQSESHQQLKDGIETNYVIMAEKAKEEAKVSSEEARVKQLEVDAIINERQTELSNTEIEVKREKLKLIDAMKEVAEVKNEDKIDEEKAKAFLGTTSGEFLASQKKVEPATKLQSDPKLSEPSSKSTKIEGVTGNVKADVPASPPAHKKHSIGGLTSPLKSKKKSDKDQKGSSIKKFFGLKPSDQNKNTKTTQPTPLKSSPKPSNKPVTATVTTEKKENVEPKSTATETKPSLEPSFSGFSQGSVHNKVEQSDASEVEGGKEEPTSKDNRKSLFKEVF</sequence>
<protein>
    <recommendedName>
        <fullName>Eisosome protein 1</fullName>
    </recommendedName>
</protein>
<accession>Q6CTI0</accession>
<keyword id="KW-1003">Cell membrane</keyword>
<keyword id="KW-0472">Membrane</keyword>
<keyword id="KW-1185">Reference proteome</keyword>
<evidence type="ECO:0000250" key="1"/>
<evidence type="ECO:0000256" key="2">
    <source>
        <dbReference type="SAM" id="MobiDB-lite"/>
    </source>
</evidence>
<evidence type="ECO:0000305" key="3"/>
<feature type="chain" id="PRO_0000410800" description="Eisosome protein 1">
    <location>
        <begin position="1"/>
        <end position="830"/>
    </location>
</feature>
<feature type="region of interest" description="Disordered" evidence="2">
    <location>
        <begin position="1"/>
        <end position="29"/>
    </location>
</feature>
<feature type="region of interest" description="Disordered" evidence="2">
    <location>
        <begin position="128"/>
        <end position="156"/>
    </location>
</feature>
<feature type="region of interest" description="Disordered" evidence="2">
    <location>
        <begin position="650"/>
        <end position="830"/>
    </location>
</feature>
<feature type="compositionally biased region" description="Low complexity" evidence="2">
    <location>
        <begin position="128"/>
        <end position="148"/>
    </location>
</feature>
<feature type="compositionally biased region" description="Low complexity" evidence="2">
    <location>
        <begin position="741"/>
        <end position="761"/>
    </location>
</feature>
<feature type="compositionally biased region" description="Basic and acidic residues" evidence="2">
    <location>
        <begin position="810"/>
        <end position="830"/>
    </location>
</feature>
<gene>
    <name type="primary">EIS1</name>
    <name type="ordered locus">KLLA0C12573g</name>
</gene>
<comment type="function">
    <text evidence="1">Required for normal formation of eisosomes, large cytoplasmic protein assemblies that localize to specialized domains on plasma membrane and mark the site of endocytosis.</text>
</comment>
<comment type="subcellular location">
    <subcellularLocation>
        <location evidence="1">Cytoplasmic granule</location>
    </subcellularLocation>
    <subcellularLocation>
        <location evidence="1">Cell membrane</location>
        <topology evidence="1">Peripheral membrane protein</topology>
        <orientation evidence="1">Cytoplasmic side</orientation>
    </subcellularLocation>
    <text evidence="1">Localizes at the eisosomes.</text>
</comment>
<comment type="similarity">
    <text evidence="3">Belongs to the EIS1 family.</text>
</comment>
<name>EIS1_KLULA</name>
<proteinExistence type="inferred from homology"/>